<protein>
    <recommendedName>
        <fullName>Neurotoxin Cex7</fullName>
    </recommendedName>
</protein>
<sequence length="69" mass="7549">AREGYLVSKSTGCKYECFWLGKNEGCDKECKAPNQGGGYGYCHAFACWCENLPESTPTYPIPGKSCGKK</sequence>
<dbReference type="EMBL" id="AY649865">
    <property type="protein sequence ID" value="AAT97998.1"/>
    <property type="molecule type" value="mRNA"/>
</dbReference>
<dbReference type="SMR" id="Q68PG8"/>
<dbReference type="GO" id="GO:0005576">
    <property type="term" value="C:extracellular region"/>
    <property type="evidence" value="ECO:0007669"/>
    <property type="project" value="UniProtKB-SubCell"/>
</dbReference>
<dbReference type="GO" id="GO:0019871">
    <property type="term" value="F:sodium channel inhibitor activity"/>
    <property type="evidence" value="ECO:0007669"/>
    <property type="project" value="InterPro"/>
</dbReference>
<dbReference type="GO" id="GO:0090729">
    <property type="term" value="F:toxin activity"/>
    <property type="evidence" value="ECO:0007669"/>
    <property type="project" value="UniProtKB-KW"/>
</dbReference>
<dbReference type="GO" id="GO:0006952">
    <property type="term" value="P:defense response"/>
    <property type="evidence" value="ECO:0007669"/>
    <property type="project" value="InterPro"/>
</dbReference>
<dbReference type="CDD" id="cd23106">
    <property type="entry name" value="neurotoxins_LC_scorpion"/>
    <property type="match status" value="1"/>
</dbReference>
<dbReference type="FunFam" id="3.30.30.10:FF:000002">
    <property type="entry name" value="Alpha-like toxin BmK-M1"/>
    <property type="match status" value="1"/>
</dbReference>
<dbReference type="Gene3D" id="3.30.30.10">
    <property type="entry name" value="Knottin, scorpion toxin-like"/>
    <property type="match status" value="1"/>
</dbReference>
<dbReference type="InterPro" id="IPR044062">
    <property type="entry name" value="LCN-type_CS_alpha_beta_dom"/>
</dbReference>
<dbReference type="InterPro" id="IPR003614">
    <property type="entry name" value="Scorpion_toxin-like"/>
</dbReference>
<dbReference type="InterPro" id="IPR036574">
    <property type="entry name" value="Scorpion_toxin-like_sf"/>
</dbReference>
<dbReference type="InterPro" id="IPR018218">
    <property type="entry name" value="Scorpion_toxinL"/>
</dbReference>
<dbReference type="InterPro" id="IPR002061">
    <property type="entry name" value="Scorpion_toxinL/defensin"/>
</dbReference>
<dbReference type="Pfam" id="PF00537">
    <property type="entry name" value="Toxin_3"/>
    <property type="match status" value="1"/>
</dbReference>
<dbReference type="PRINTS" id="PR00285">
    <property type="entry name" value="SCORPNTOXIN"/>
</dbReference>
<dbReference type="SMART" id="SM00505">
    <property type="entry name" value="Knot1"/>
    <property type="match status" value="1"/>
</dbReference>
<dbReference type="SUPFAM" id="SSF57095">
    <property type="entry name" value="Scorpion toxin-like"/>
    <property type="match status" value="1"/>
</dbReference>
<dbReference type="PROSITE" id="PS51863">
    <property type="entry name" value="LCN_CSAB"/>
    <property type="match status" value="1"/>
</dbReference>
<proteinExistence type="evidence at transcript level"/>
<keyword id="KW-0027">Amidation</keyword>
<keyword id="KW-1015">Disulfide bond</keyword>
<keyword id="KW-0872">Ion channel impairing toxin</keyword>
<keyword id="KW-0528">Neurotoxin</keyword>
<keyword id="KW-0964">Secreted</keyword>
<keyword id="KW-0732">Signal</keyword>
<keyword id="KW-0800">Toxin</keyword>
<keyword id="KW-0738">Voltage-gated sodium channel impairing toxin</keyword>
<accession>Q68PG8</accession>
<feature type="signal peptide" evidence="2">
    <location>
        <begin position="1" status="less than"/>
        <end position="1"/>
    </location>
</feature>
<feature type="chain" id="PRO_0000254074" description="Neurotoxin Cex7">
    <location>
        <begin position="2"/>
        <end position="66"/>
    </location>
</feature>
<feature type="propeptide" id="PRO_0000254075">
    <location>
        <begin position="67"/>
        <end position="69"/>
    </location>
</feature>
<feature type="domain" description="LCN-type CS-alpha/beta" evidence="3">
    <location>
        <begin position="2"/>
        <end position="67"/>
    </location>
</feature>
<feature type="modified residue" description="Cysteine amide" evidence="2">
    <location>
        <position position="66"/>
    </location>
</feature>
<feature type="disulfide bond" evidence="3">
    <location>
        <begin position="13"/>
        <end position="66"/>
    </location>
</feature>
<feature type="disulfide bond" evidence="3">
    <location>
        <begin position="17"/>
        <end position="42"/>
    </location>
</feature>
<feature type="disulfide bond" evidence="3">
    <location>
        <begin position="26"/>
        <end position="47"/>
    </location>
</feature>
<feature type="disulfide bond" evidence="3">
    <location>
        <begin position="30"/>
        <end position="49"/>
    </location>
</feature>
<feature type="non-terminal residue">
    <location>
        <position position="1"/>
    </location>
</feature>
<evidence type="ECO:0000250" key="1"/>
<evidence type="ECO:0000255" key="2"/>
<evidence type="ECO:0000255" key="3">
    <source>
        <dbReference type="PROSITE-ProRule" id="PRU01210"/>
    </source>
</evidence>
<evidence type="ECO:0000305" key="4"/>
<name>SCX7_CENEX</name>
<reference key="1">
    <citation type="journal article" date="2004" name="Biochimie">
        <title>Biochemical, genetic and physiological characterization of venom components from two species of scorpions: Centruroides exilicauda Wood and Centruroides sculpturatus Ewing.</title>
        <authorList>
            <person name="Valdez-Cruz N.A."/>
            <person name="Davila S."/>
            <person name="Licea A."/>
            <person name="Corona M."/>
            <person name="Zamudio F.Z."/>
            <person name="Garcia-Valdes J."/>
            <person name="Boyer L."/>
            <person name="Possani L.D."/>
        </authorList>
    </citation>
    <scope>NUCLEOTIDE SEQUENCE [MRNA]</scope>
    <source>
        <tissue>Venom gland</tissue>
    </source>
</reference>
<organism>
    <name type="scientific">Centruroides exilicauda</name>
    <name type="common">Bark scorpion</name>
    <name type="synonym">Buthus exilicauda</name>
    <dbReference type="NCBI Taxonomy" id="6879"/>
    <lineage>
        <taxon>Eukaryota</taxon>
        <taxon>Metazoa</taxon>
        <taxon>Ecdysozoa</taxon>
        <taxon>Arthropoda</taxon>
        <taxon>Chelicerata</taxon>
        <taxon>Arachnida</taxon>
        <taxon>Scorpiones</taxon>
        <taxon>Buthida</taxon>
        <taxon>Buthoidea</taxon>
        <taxon>Buthidae</taxon>
        <taxon>Centruroides</taxon>
    </lineage>
</organism>
<comment type="function">
    <text evidence="1">Beta toxins bind voltage-independently at site-4 of sodium channels (Nav) and shift the voltage of activation toward more negative potentials thereby affecting sodium channel activation and promoting spontaneous and repetitive firing.</text>
</comment>
<comment type="subcellular location">
    <subcellularLocation>
        <location evidence="1">Secreted</location>
    </subcellularLocation>
</comment>
<comment type="tissue specificity">
    <text>Expressed by the venom gland.</text>
</comment>
<comment type="domain">
    <text evidence="4">Has the structural arrangement of an alpha-helix connected to antiparallel beta-sheets by disulfide bonds (CS-alpha/beta).</text>
</comment>
<comment type="similarity">
    <text evidence="4">Belongs to the long (4 C-C) scorpion toxin superfamily. Sodium channel inhibitor family. Beta subfamily.</text>
</comment>